<evidence type="ECO:0000255" key="1">
    <source>
        <dbReference type="HAMAP-Rule" id="MF_01542"/>
    </source>
</evidence>
<keyword id="KW-1185">Reference proteome</keyword>
<name>Y3414_HALH5</name>
<organism>
    <name type="scientific">Halalkalibacterium halodurans (strain ATCC BAA-125 / DSM 18197 / FERM 7344 / JCM 9153 / C-125)</name>
    <name type="common">Bacillus halodurans</name>
    <dbReference type="NCBI Taxonomy" id="272558"/>
    <lineage>
        <taxon>Bacteria</taxon>
        <taxon>Bacillati</taxon>
        <taxon>Bacillota</taxon>
        <taxon>Bacilli</taxon>
        <taxon>Bacillales</taxon>
        <taxon>Bacillaceae</taxon>
        <taxon>Halalkalibacterium (ex Joshi et al. 2022)</taxon>
    </lineage>
</organism>
<sequence>MRPIIEFCLSNLASGTQKAMEELEKDPNLDIIEYGCLSHCGSCANDKFALVNGEYVSGETNEQLVENIYHYLDENPMF</sequence>
<comment type="similarity">
    <text evidence="1">Belongs to the UPF0349 family.</text>
</comment>
<protein>
    <recommendedName>
        <fullName evidence="1">UPF0349 protein BH3414</fullName>
    </recommendedName>
</protein>
<proteinExistence type="inferred from homology"/>
<accession>Q9K7E8</accession>
<dbReference type="EMBL" id="BA000004">
    <property type="protein sequence ID" value="BAB07133.1"/>
    <property type="molecule type" value="Genomic_DNA"/>
</dbReference>
<dbReference type="PIR" id="F84076">
    <property type="entry name" value="F84076"/>
</dbReference>
<dbReference type="RefSeq" id="WP_010899554.1">
    <property type="nucleotide sequence ID" value="NC_002570.2"/>
</dbReference>
<dbReference type="SMR" id="Q9K7E8"/>
<dbReference type="STRING" id="272558.gene:10729327"/>
<dbReference type="GeneID" id="87598952"/>
<dbReference type="KEGG" id="bha:BH3414"/>
<dbReference type="eggNOG" id="COG4844">
    <property type="taxonomic scope" value="Bacteria"/>
</dbReference>
<dbReference type="HOGENOM" id="CLU_182025_0_0_9"/>
<dbReference type="OrthoDB" id="1684419at2"/>
<dbReference type="Proteomes" id="UP000001258">
    <property type="component" value="Chromosome"/>
</dbReference>
<dbReference type="HAMAP" id="MF_01542">
    <property type="entry name" value="UPF0349"/>
    <property type="match status" value="1"/>
</dbReference>
<dbReference type="InterPro" id="IPR009910">
    <property type="entry name" value="DUF1450"/>
</dbReference>
<dbReference type="InterPro" id="IPR022916">
    <property type="entry name" value="UPF0349"/>
</dbReference>
<dbReference type="NCBIfam" id="NF010190">
    <property type="entry name" value="PRK13669.1"/>
    <property type="match status" value="1"/>
</dbReference>
<dbReference type="Pfam" id="PF07293">
    <property type="entry name" value="DUF1450"/>
    <property type="match status" value="1"/>
</dbReference>
<feature type="chain" id="PRO_0000165885" description="UPF0349 protein BH3414">
    <location>
        <begin position="1"/>
        <end position="78"/>
    </location>
</feature>
<gene>
    <name type="ordered locus">BH3414</name>
</gene>
<reference key="1">
    <citation type="journal article" date="2000" name="Nucleic Acids Res.">
        <title>Complete genome sequence of the alkaliphilic bacterium Bacillus halodurans and genomic sequence comparison with Bacillus subtilis.</title>
        <authorList>
            <person name="Takami H."/>
            <person name="Nakasone K."/>
            <person name="Takaki Y."/>
            <person name="Maeno G."/>
            <person name="Sasaki R."/>
            <person name="Masui N."/>
            <person name="Fuji F."/>
            <person name="Hirama C."/>
            <person name="Nakamura Y."/>
            <person name="Ogasawara N."/>
            <person name="Kuhara S."/>
            <person name="Horikoshi K."/>
        </authorList>
    </citation>
    <scope>NUCLEOTIDE SEQUENCE [LARGE SCALE GENOMIC DNA]</scope>
    <source>
        <strain>ATCC BAA-125 / DSM 18197 / FERM 7344 / JCM 9153 / C-125</strain>
    </source>
</reference>